<evidence type="ECO:0000255" key="1">
    <source>
        <dbReference type="HAMAP-Rule" id="MF_00641"/>
    </source>
</evidence>
<proteinExistence type="inferred from homology"/>
<gene>
    <name evidence="1" type="primary">glcB</name>
    <name type="ordered locus">BAB1_1663</name>
</gene>
<feature type="chain" id="PRO_1000056897" description="Malate synthase G">
    <location>
        <begin position="1"/>
        <end position="728"/>
    </location>
</feature>
<feature type="active site" description="Proton acceptor" evidence="1">
    <location>
        <position position="345"/>
    </location>
</feature>
<feature type="active site" description="Proton donor" evidence="1">
    <location>
        <position position="636"/>
    </location>
</feature>
<feature type="binding site" evidence="1">
    <location>
        <position position="123"/>
    </location>
    <ligand>
        <name>acetyl-CoA</name>
        <dbReference type="ChEBI" id="CHEBI:57288"/>
    </ligand>
</feature>
<feature type="binding site" evidence="1">
    <location>
        <begin position="130"/>
        <end position="131"/>
    </location>
    <ligand>
        <name>acetyl-CoA</name>
        <dbReference type="ChEBI" id="CHEBI:57288"/>
    </ligand>
</feature>
<feature type="binding site" evidence="1">
    <location>
        <position position="281"/>
    </location>
    <ligand>
        <name>acetyl-CoA</name>
        <dbReference type="ChEBI" id="CHEBI:57288"/>
    </ligand>
</feature>
<feature type="binding site" evidence="1">
    <location>
        <position position="318"/>
    </location>
    <ligand>
        <name>acetyl-CoA</name>
        <dbReference type="ChEBI" id="CHEBI:57288"/>
    </ligand>
</feature>
<feature type="binding site" evidence="1">
    <location>
        <position position="345"/>
    </location>
    <ligand>
        <name>glyoxylate</name>
        <dbReference type="ChEBI" id="CHEBI:36655"/>
    </ligand>
</feature>
<feature type="binding site" evidence="1">
    <location>
        <position position="437"/>
    </location>
    <ligand>
        <name>glyoxylate</name>
        <dbReference type="ChEBI" id="CHEBI:36655"/>
    </ligand>
</feature>
<feature type="binding site" evidence="1">
    <location>
        <position position="437"/>
    </location>
    <ligand>
        <name>Mg(2+)</name>
        <dbReference type="ChEBI" id="CHEBI:18420"/>
    </ligand>
</feature>
<feature type="binding site" evidence="1">
    <location>
        <begin position="462"/>
        <end position="465"/>
    </location>
    <ligand>
        <name>glyoxylate</name>
        <dbReference type="ChEBI" id="CHEBI:36655"/>
    </ligand>
</feature>
<feature type="binding site" evidence="1">
    <location>
        <position position="465"/>
    </location>
    <ligand>
        <name>Mg(2+)</name>
        <dbReference type="ChEBI" id="CHEBI:18420"/>
    </ligand>
</feature>
<feature type="binding site" evidence="1">
    <location>
        <position position="546"/>
    </location>
    <ligand>
        <name>acetyl-CoA</name>
        <dbReference type="ChEBI" id="CHEBI:57288"/>
    </ligand>
</feature>
<feature type="modified residue" description="Cysteine sulfenic acid (-SOH)" evidence="1">
    <location>
        <position position="622"/>
    </location>
</feature>
<comment type="function">
    <text evidence="1">Involved in the glycolate utilization. Catalyzes the condensation and subsequent hydrolysis of acetyl-coenzyme A (acetyl-CoA) and glyoxylate to form malate and CoA.</text>
</comment>
<comment type="catalytic activity">
    <reaction evidence="1">
        <text>glyoxylate + acetyl-CoA + H2O = (S)-malate + CoA + H(+)</text>
        <dbReference type="Rhea" id="RHEA:18181"/>
        <dbReference type="ChEBI" id="CHEBI:15377"/>
        <dbReference type="ChEBI" id="CHEBI:15378"/>
        <dbReference type="ChEBI" id="CHEBI:15589"/>
        <dbReference type="ChEBI" id="CHEBI:36655"/>
        <dbReference type="ChEBI" id="CHEBI:57287"/>
        <dbReference type="ChEBI" id="CHEBI:57288"/>
        <dbReference type="EC" id="2.3.3.9"/>
    </reaction>
</comment>
<comment type="cofactor">
    <cofactor evidence="1">
        <name>Mg(2+)</name>
        <dbReference type="ChEBI" id="CHEBI:18420"/>
    </cofactor>
</comment>
<comment type="pathway">
    <text evidence="1">Carbohydrate metabolism; glyoxylate cycle; (S)-malate from isocitrate: step 2/2.</text>
</comment>
<comment type="subunit">
    <text evidence="1">Monomer.</text>
</comment>
<comment type="subcellular location">
    <subcellularLocation>
        <location evidence="1">Cytoplasm</location>
    </subcellularLocation>
</comment>
<comment type="similarity">
    <text evidence="1">Belongs to the malate synthase family. GlcB subfamily.</text>
</comment>
<dbReference type="EC" id="2.3.3.9" evidence="1"/>
<dbReference type="EMBL" id="AM040264">
    <property type="protein sequence ID" value="CAJ11619.1"/>
    <property type="molecule type" value="Genomic_DNA"/>
</dbReference>
<dbReference type="RefSeq" id="WP_002966937.1">
    <property type="nucleotide sequence ID" value="NZ_KN046823.1"/>
</dbReference>
<dbReference type="SMR" id="Q2YRK5"/>
<dbReference type="STRING" id="359391.BAB1_1663"/>
<dbReference type="KEGG" id="bmf:BAB1_1663"/>
<dbReference type="PATRIC" id="fig|359391.11.peg.179"/>
<dbReference type="HOGENOM" id="CLU_028446_1_0_5"/>
<dbReference type="PhylomeDB" id="Q2YRK5"/>
<dbReference type="UniPathway" id="UPA00703">
    <property type="reaction ID" value="UER00720"/>
</dbReference>
<dbReference type="Proteomes" id="UP000002719">
    <property type="component" value="Chromosome I"/>
</dbReference>
<dbReference type="GO" id="GO:0005829">
    <property type="term" value="C:cytosol"/>
    <property type="evidence" value="ECO:0007669"/>
    <property type="project" value="TreeGrafter"/>
</dbReference>
<dbReference type="GO" id="GO:0000287">
    <property type="term" value="F:magnesium ion binding"/>
    <property type="evidence" value="ECO:0007669"/>
    <property type="project" value="TreeGrafter"/>
</dbReference>
<dbReference type="GO" id="GO:0004474">
    <property type="term" value="F:malate synthase activity"/>
    <property type="evidence" value="ECO:0007669"/>
    <property type="project" value="UniProtKB-UniRule"/>
</dbReference>
<dbReference type="GO" id="GO:0009436">
    <property type="term" value="P:glyoxylate catabolic process"/>
    <property type="evidence" value="ECO:0007669"/>
    <property type="project" value="TreeGrafter"/>
</dbReference>
<dbReference type="GO" id="GO:0006097">
    <property type="term" value="P:glyoxylate cycle"/>
    <property type="evidence" value="ECO:0007669"/>
    <property type="project" value="UniProtKB-UniRule"/>
</dbReference>
<dbReference type="GO" id="GO:0006099">
    <property type="term" value="P:tricarboxylic acid cycle"/>
    <property type="evidence" value="ECO:0007669"/>
    <property type="project" value="UniProtKB-KW"/>
</dbReference>
<dbReference type="CDD" id="cd00728">
    <property type="entry name" value="malate_synt_G"/>
    <property type="match status" value="1"/>
</dbReference>
<dbReference type="FunFam" id="3.20.20.360:FF:000002">
    <property type="entry name" value="Malate synthase G"/>
    <property type="match status" value="1"/>
</dbReference>
<dbReference type="Gene3D" id="3.20.20.360">
    <property type="entry name" value="Malate synthase, domain 3"/>
    <property type="match status" value="2"/>
</dbReference>
<dbReference type="Gene3D" id="1.20.1220.12">
    <property type="entry name" value="Malate synthase, domain III"/>
    <property type="match status" value="1"/>
</dbReference>
<dbReference type="HAMAP" id="MF_00641">
    <property type="entry name" value="Malate_synth_G"/>
    <property type="match status" value="1"/>
</dbReference>
<dbReference type="InterPro" id="IPR044856">
    <property type="entry name" value="Malate_synth_C_sf"/>
</dbReference>
<dbReference type="InterPro" id="IPR011076">
    <property type="entry name" value="Malate_synth_sf"/>
</dbReference>
<dbReference type="InterPro" id="IPR001465">
    <property type="entry name" value="Malate_synthase_TIM"/>
</dbReference>
<dbReference type="InterPro" id="IPR006253">
    <property type="entry name" value="Malate_synthG"/>
</dbReference>
<dbReference type="InterPro" id="IPR048355">
    <property type="entry name" value="MS_C"/>
</dbReference>
<dbReference type="InterPro" id="IPR048356">
    <property type="entry name" value="MS_N"/>
</dbReference>
<dbReference type="InterPro" id="IPR046363">
    <property type="entry name" value="MS_N_TIM-barrel_dom"/>
</dbReference>
<dbReference type="InterPro" id="IPR048357">
    <property type="entry name" value="MSG_insertion"/>
</dbReference>
<dbReference type="NCBIfam" id="TIGR01345">
    <property type="entry name" value="malate_syn_G"/>
    <property type="match status" value="1"/>
</dbReference>
<dbReference type="NCBIfam" id="NF002825">
    <property type="entry name" value="PRK02999.1"/>
    <property type="match status" value="1"/>
</dbReference>
<dbReference type="PANTHER" id="PTHR42739">
    <property type="entry name" value="MALATE SYNTHASE G"/>
    <property type="match status" value="1"/>
</dbReference>
<dbReference type="PANTHER" id="PTHR42739:SF1">
    <property type="entry name" value="MALATE SYNTHASE G"/>
    <property type="match status" value="1"/>
</dbReference>
<dbReference type="Pfam" id="PF20659">
    <property type="entry name" value="MS_C"/>
    <property type="match status" value="1"/>
</dbReference>
<dbReference type="Pfam" id="PF20656">
    <property type="entry name" value="MS_N"/>
    <property type="match status" value="1"/>
</dbReference>
<dbReference type="Pfam" id="PF01274">
    <property type="entry name" value="MS_TIM-barrel"/>
    <property type="match status" value="1"/>
</dbReference>
<dbReference type="Pfam" id="PF20658">
    <property type="entry name" value="MSG_insertion"/>
    <property type="match status" value="1"/>
</dbReference>
<dbReference type="SUPFAM" id="SSF51645">
    <property type="entry name" value="Malate synthase G"/>
    <property type="match status" value="1"/>
</dbReference>
<sequence length="728" mass="80044">MGSAEKRNYVEIEGLAVAPELVEFLAKEAAPGTGVEPEKFWKGFAAIIRDLTPKNRALLAKRDELQARIDAWYKENRDKGYSQADYQQFLKDIGYLLPEGGAFSVSTTNVDPEITHIAGPQLVVPVMNARYALNAANARWGSLYDALYGTDAISEADGAEKGKGYNPKRGEKVIAWAKNFLDESAPLSTGKWADVAGLAVNDGKLEIRLTDGSATTLKDESQFKGYNGDAASPTNVLLAKHNMHVDIVINADHPIGKTDPAHIADVVLESAISTIQDCEDSIAVVDAEDKVAVYRNWLGLMNGKLEDTFEKNGKQMTRRLNGDRTYTAPDGSTLTLKGRSLMLVRNVGHLMTNPAILDAEGNEVPEGIMDAAFTSLIALHDIGPNGRHMNSREGSVYIVKPKMHGPEEVAFANEIFTRTEEMLGMKPNTLKIGIMDEERRTTVNLKEAIRAAKDRVVFINTGFLDRTGDEIHTSMEAGPMIRKGDMKQAAWIGAYEQWNVDIGLECGLSGHAQIGKGMWAMPDMMAAMLEQKIAHPKAGANTAWVPSPTAATLHATHYHKIDVAAVQEKLKSRPRAKLDDILSVPVAVRPNWTPDDIQHEIDNNAQGILGYVVRWIDQGVGCSKVPDINNVGLMEDRATLRISAQHIANWLYHGVVSEAQVMETMKRMAAIVDKQNEGDPLYRPMAADFDKSIAFQAACDLVFKGREQPNGYTEPVLHRRRLELKQAS</sequence>
<organism>
    <name type="scientific">Brucella abortus (strain 2308)</name>
    <dbReference type="NCBI Taxonomy" id="359391"/>
    <lineage>
        <taxon>Bacteria</taxon>
        <taxon>Pseudomonadati</taxon>
        <taxon>Pseudomonadota</taxon>
        <taxon>Alphaproteobacteria</taxon>
        <taxon>Hyphomicrobiales</taxon>
        <taxon>Brucellaceae</taxon>
        <taxon>Brucella/Ochrobactrum group</taxon>
        <taxon>Brucella</taxon>
    </lineage>
</organism>
<accession>Q2YRK5</accession>
<reference key="1">
    <citation type="journal article" date="2005" name="Infect. Immun.">
        <title>Whole-genome analyses of speciation events in pathogenic Brucellae.</title>
        <authorList>
            <person name="Chain P.S."/>
            <person name="Comerci D.J."/>
            <person name="Tolmasky M.E."/>
            <person name="Larimer F.W."/>
            <person name="Malfatti S.A."/>
            <person name="Vergez L.M."/>
            <person name="Aguero F."/>
            <person name="Land M.L."/>
            <person name="Ugalde R.A."/>
            <person name="Garcia E."/>
        </authorList>
    </citation>
    <scope>NUCLEOTIDE SEQUENCE [LARGE SCALE GENOMIC DNA]</scope>
    <source>
        <strain>2308</strain>
    </source>
</reference>
<keyword id="KW-0963">Cytoplasm</keyword>
<keyword id="KW-0329">Glyoxylate bypass</keyword>
<keyword id="KW-0460">Magnesium</keyword>
<keyword id="KW-0479">Metal-binding</keyword>
<keyword id="KW-0558">Oxidation</keyword>
<keyword id="KW-1185">Reference proteome</keyword>
<keyword id="KW-0808">Transferase</keyword>
<keyword id="KW-0816">Tricarboxylic acid cycle</keyword>
<protein>
    <recommendedName>
        <fullName evidence="1">Malate synthase G</fullName>
        <ecNumber evidence="1">2.3.3.9</ecNumber>
    </recommendedName>
</protein>
<name>MASZ_BRUA2</name>